<comment type="function">
    <text evidence="1">Binds to the 23S rRNA.</text>
</comment>
<comment type="similarity">
    <text evidence="1">Belongs to the bacterial ribosomal protein bL9 family.</text>
</comment>
<accession>Q72GV5</accession>
<organism>
    <name type="scientific">Thermus thermophilus (strain ATCC BAA-163 / DSM 7039 / HB27)</name>
    <dbReference type="NCBI Taxonomy" id="262724"/>
    <lineage>
        <taxon>Bacteria</taxon>
        <taxon>Thermotogati</taxon>
        <taxon>Deinococcota</taxon>
        <taxon>Deinococci</taxon>
        <taxon>Thermales</taxon>
        <taxon>Thermaceae</taxon>
        <taxon>Thermus</taxon>
    </lineage>
</organism>
<name>RL9_THET2</name>
<proteinExistence type="evidence at protein level"/>
<sequence length="148" mass="16411">MKVILLEPLENLGDVGQVVDVKPGYARNYLLPRGLAVLATESNLKALEARIRAQAKRLAERKAEAERLKEILENLTLTIPVRAGETKIYGSVTAKDIAEALSRQHGITIDPKRLALEKPIKELGEYVLTYKPHPEVPIQLKVSVVAQE</sequence>
<protein>
    <recommendedName>
        <fullName evidence="1">Large ribosomal subunit protein bL9</fullName>
    </recommendedName>
    <alternativeName>
        <fullName evidence="2">50S ribosomal protein L9</fullName>
    </alternativeName>
</protein>
<evidence type="ECO:0000255" key="1">
    <source>
        <dbReference type="HAMAP-Rule" id="MF_00503"/>
    </source>
</evidence>
<evidence type="ECO:0000305" key="2"/>
<evidence type="ECO:0007829" key="3">
    <source>
        <dbReference type="PDB" id="4V63"/>
    </source>
</evidence>
<evidence type="ECO:0007829" key="4">
    <source>
        <dbReference type="PDB" id="4V9N"/>
    </source>
</evidence>
<dbReference type="EMBL" id="AE017221">
    <property type="protein sequence ID" value="AAS82085.1"/>
    <property type="molecule type" value="Genomic_DNA"/>
</dbReference>
<dbReference type="RefSeq" id="WP_011174101.1">
    <property type="nucleotide sequence ID" value="NC_005835.1"/>
</dbReference>
<dbReference type="PDB" id="4V4I">
    <property type="method" value="X-ray"/>
    <property type="resolution" value="3.71 A"/>
    <property type="chains" value="G=1-148"/>
</dbReference>
<dbReference type="PDB" id="4V4J">
    <property type="method" value="X-ray"/>
    <property type="resolution" value="3.83 A"/>
    <property type="chains" value="G=1-148"/>
</dbReference>
<dbReference type="PDB" id="4V63">
    <property type="method" value="X-ray"/>
    <property type="resolution" value="3.21 A"/>
    <property type="chains" value="BI/DI=1-148"/>
</dbReference>
<dbReference type="PDB" id="4V67">
    <property type="method" value="X-ray"/>
    <property type="resolution" value="3.00 A"/>
    <property type="chains" value="BI/DI=1-148"/>
</dbReference>
<dbReference type="PDB" id="4V7P">
    <property type="method" value="X-ray"/>
    <property type="resolution" value="3.62 A"/>
    <property type="chains" value="BH/CH=1-148"/>
</dbReference>
<dbReference type="PDB" id="4V83">
    <property type="method" value="X-ray"/>
    <property type="resolution" value="3.50 A"/>
    <property type="chains" value="BH/DH=1-145"/>
</dbReference>
<dbReference type="PDB" id="4V84">
    <property type="method" value="X-ray"/>
    <property type="resolution" value="3.40 A"/>
    <property type="chains" value="BH/DH=1-145"/>
</dbReference>
<dbReference type="PDB" id="4V9N">
    <property type="method" value="X-ray"/>
    <property type="resolution" value="3.40 A"/>
    <property type="chains" value="BI/DI=1-145"/>
</dbReference>
<dbReference type="PDB" id="4V9Q">
    <property type="method" value="X-ray"/>
    <property type="resolution" value="3.40 A"/>
    <property type="chains" value="AI/CI=1-145"/>
</dbReference>
<dbReference type="PDB" id="4XEJ">
    <property type="method" value="X-ray"/>
    <property type="resolution" value="3.80 A"/>
    <property type="chains" value="AL09/BL09=1-145"/>
</dbReference>
<dbReference type="PDB" id="5J4D">
    <property type="method" value="X-ray"/>
    <property type="resolution" value="3.10 A"/>
    <property type="chains" value="J/OB=1-148"/>
</dbReference>
<dbReference type="PDB" id="5V8I">
    <property type="method" value="X-ray"/>
    <property type="resolution" value="3.25 A"/>
    <property type="chains" value="1I/2I=1-148"/>
</dbReference>
<dbReference type="PDB" id="6B4V">
    <property type="method" value="X-ray"/>
    <property type="resolution" value="3.40 A"/>
    <property type="chains" value="J/NB=1-148"/>
</dbReference>
<dbReference type="PDB" id="6BOH">
    <property type="method" value="X-ray"/>
    <property type="resolution" value="3.40 A"/>
    <property type="chains" value="J/OB=1-148"/>
</dbReference>
<dbReference type="PDB" id="6BOK">
    <property type="method" value="X-ray"/>
    <property type="resolution" value="3.55 A"/>
    <property type="chains" value="J/MB=1-148"/>
</dbReference>
<dbReference type="PDB" id="6N1D">
    <property type="method" value="X-ray"/>
    <property type="resolution" value="3.20 A"/>
    <property type="chains" value="AL09/BL09=1-148"/>
</dbReference>
<dbReference type="PDBsum" id="4V4I"/>
<dbReference type="PDBsum" id="4V4J"/>
<dbReference type="PDBsum" id="4V63"/>
<dbReference type="PDBsum" id="4V67"/>
<dbReference type="PDBsum" id="4V7P"/>
<dbReference type="PDBsum" id="4V83"/>
<dbReference type="PDBsum" id="4V84"/>
<dbReference type="PDBsum" id="4V9N"/>
<dbReference type="PDBsum" id="4V9Q"/>
<dbReference type="PDBsum" id="4XEJ"/>
<dbReference type="PDBsum" id="5J4D"/>
<dbReference type="PDBsum" id="5V8I"/>
<dbReference type="PDBsum" id="6B4V"/>
<dbReference type="PDBsum" id="6BOH"/>
<dbReference type="PDBsum" id="6BOK"/>
<dbReference type="PDBsum" id="6N1D"/>
<dbReference type="SMR" id="Q72GV5"/>
<dbReference type="IntAct" id="Q72GV5">
    <property type="interactions" value="3"/>
</dbReference>
<dbReference type="KEGG" id="tth:TT_C1743"/>
<dbReference type="eggNOG" id="COG0359">
    <property type="taxonomic scope" value="Bacteria"/>
</dbReference>
<dbReference type="HOGENOM" id="CLU_078938_3_0_0"/>
<dbReference type="OrthoDB" id="9788336at2"/>
<dbReference type="Proteomes" id="UP000000592">
    <property type="component" value="Chromosome"/>
</dbReference>
<dbReference type="GO" id="GO:1990904">
    <property type="term" value="C:ribonucleoprotein complex"/>
    <property type="evidence" value="ECO:0007669"/>
    <property type="project" value="UniProtKB-KW"/>
</dbReference>
<dbReference type="GO" id="GO:0005840">
    <property type="term" value="C:ribosome"/>
    <property type="evidence" value="ECO:0007669"/>
    <property type="project" value="UniProtKB-KW"/>
</dbReference>
<dbReference type="GO" id="GO:0019843">
    <property type="term" value="F:rRNA binding"/>
    <property type="evidence" value="ECO:0007669"/>
    <property type="project" value="UniProtKB-UniRule"/>
</dbReference>
<dbReference type="GO" id="GO:0003735">
    <property type="term" value="F:structural constituent of ribosome"/>
    <property type="evidence" value="ECO:0007669"/>
    <property type="project" value="InterPro"/>
</dbReference>
<dbReference type="GO" id="GO:0006412">
    <property type="term" value="P:translation"/>
    <property type="evidence" value="ECO:0007669"/>
    <property type="project" value="UniProtKB-UniRule"/>
</dbReference>
<dbReference type="FunFam" id="3.40.5.10:FF:000003">
    <property type="entry name" value="50S ribosomal protein L9"/>
    <property type="match status" value="1"/>
</dbReference>
<dbReference type="Gene3D" id="3.10.430.100">
    <property type="entry name" value="Ribosomal protein L9, C-terminal domain"/>
    <property type="match status" value="1"/>
</dbReference>
<dbReference type="Gene3D" id="3.40.5.10">
    <property type="entry name" value="Ribosomal protein L9, N-terminal domain"/>
    <property type="match status" value="1"/>
</dbReference>
<dbReference type="HAMAP" id="MF_00503">
    <property type="entry name" value="Ribosomal_bL9"/>
    <property type="match status" value="1"/>
</dbReference>
<dbReference type="InterPro" id="IPR000244">
    <property type="entry name" value="Ribosomal_bL9"/>
</dbReference>
<dbReference type="InterPro" id="IPR009027">
    <property type="entry name" value="Ribosomal_bL9/RNase_H1_N"/>
</dbReference>
<dbReference type="InterPro" id="IPR020594">
    <property type="entry name" value="Ribosomal_bL9_bac/chp"/>
</dbReference>
<dbReference type="InterPro" id="IPR020069">
    <property type="entry name" value="Ribosomal_bL9_C"/>
</dbReference>
<dbReference type="InterPro" id="IPR036791">
    <property type="entry name" value="Ribosomal_bL9_C_sf"/>
</dbReference>
<dbReference type="InterPro" id="IPR020070">
    <property type="entry name" value="Ribosomal_bL9_N"/>
</dbReference>
<dbReference type="InterPro" id="IPR036935">
    <property type="entry name" value="Ribosomal_bL9_N_sf"/>
</dbReference>
<dbReference type="NCBIfam" id="TIGR00158">
    <property type="entry name" value="L9"/>
    <property type="match status" value="1"/>
</dbReference>
<dbReference type="PANTHER" id="PTHR21368">
    <property type="entry name" value="50S RIBOSOMAL PROTEIN L9"/>
    <property type="match status" value="1"/>
</dbReference>
<dbReference type="Pfam" id="PF03948">
    <property type="entry name" value="Ribosomal_L9_C"/>
    <property type="match status" value="1"/>
</dbReference>
<dbReference type="Pfam" id="PF01281">
    <property type="entry name" value="Ribosomal_L9_N"/>
    <property type="match status" value="1"/>
</dbReference>
<dbReference type="SUPFAM" id="SSF55658">
    <property type="entry name" value="L9 N-domain-like"/>
    <property type="match status" value="1"/>
</dbReference>
<dbReference type="SUPFAM" id="SSF55653">
    <property type="entry name" value="Ribosomal protein L9 C-domain"/>
    <property type="match status" value="1"/>
</dbReference>
<dbReference type="PROSITE" id="PS00651">
    <property type="entry name" value="RIBOSOMAL_L9"/>
    <property type="match status" value="1"/>
</dbReference>
<reference key="1">
    <citation type="journal article" date="2004" name="Nat. Biotechnol.">
        <title>The genome sequence of the extreme thermophile Thermus thermophilus.</title>
        <authorList>
            <person name="Henne A."/>
            <person name="Brueggemann H."/>
            <person name="Raasch C."/>
            <person name="Wiezer A."/>
            <person name="Hartsch T."/>
            <person name="Liesegang H."/>
            <person name="Johann A."/>
            <person name="Lienard T."/>
            <person name="Gohl O."/>
            <person name="Martinez-Arias R."/>
            <person name="Jacobi C."/>
            <person name="Starkuviene V."/>
            <person name="Schlenczeck S."/>
            <person name="Dencker S."/>
            <person name="Huber R."/>
            <person name="Klenk H.-P."/>
            <person name="Kramer W."/>
            <person name="Merkl R."/>
            <person name="Gottschalk G."/>
            <person name="Fritz H.-J."/>
        </authorList>
    </citation>
    <scope>NUCLEOTIDE SEQUENCE [LARGE SCALE GENOMIC DNA]</scope>
    <source>
        <strain>ATCC BAA-163 / DSM 7039 / HB27</strain>
    </source>
</reference>
<feature type="chain" id="PRO_0000236610" description="Large ribosomal subunit protein bL9">
    <location>
        <begin position="1"/>
        <end position="148"/>
    </location>
</feature>
<feature type="strand" evidence="3">
    <location>
        <begin position="2"/>
        <end position="5"/>
    </location>
</feature>
<feature type="turn" evidence="3">
    <location>
        <begin position="10"/>
        <end position="12"/>
    </location>
</feature>
<feature type="strand" evidence="3">
    <location>
        <begin position="18"/>
        <end position="20"/>
    </location>
</feature>
<feature type="helix" evidence="3">
    <location>
        <begin position="23"/>
        <end position="27"/>
    </location>
</feature>
<feature type="turn" evidence="3">
    <location>
        <begin position="28"/>
        <end position="34"/>
    </location>
</feature>
<feature type="strand" evidence="3">
    <location>
        <begin position="35"/>
        <end position="38"/>
    </location>
</feature>
<feature type="helix" evidence="3">
    <location>
        <begin position="41"/>
        <end position="59"/>
    </location>
</feature>
<feature type="helix" evidence="3">
    <location>
        <begin position="61"/>
        <end position="64"/>
    </location>
</feature>
<feature type="helix" evidence="3">
    <location>
        <begin position="67"/>
        <end position="71"/>
    </location>
</feature>
<feature type="strand" evidence="3">
    <location>
        <begin position="72"/>
        <end position="74"/>
    </location>
</feature>
<feature type="strand" evidence="4">
    <location>
        <begin position="77"/>
        <end position="79"/>
    </location>
</feature>
<feature type="strand" evidence="3">
    <location>
        <begin position="83"/>
        <end position="90"/>
    </location>
</feature>
<feature type="helix" evidence="3">
    <location>
        <begin position="95"/>
        <end position="103"/>
    </location>
</feature>
<feature type="turn" evidence="3">
    <location>
        <begin position="111"/>
        <end position="113"/>
    </location>
</feature>
<feature type="strand" evidence="3">
    <location>
        <begin position="130"/>
        <end position="133"/>
    </location>
</feature>
<feature type="strand" evidence="3">
    <location>
        <begin position="136"/>
        <end position="138"/>
    </location>
</feature>
<gene>
    <name evidence="1" type="primary">rplI</name>
    <name type="ordered locus">TT_C1743</name>
</gene>
<keyword id="KW-0002">3D-structure</keyword>
<keyword id="KW-0687">Ribonucleoprotein</keyword>
<keyword id="KW-0689">Ribosomal protein</keyword>
<keyword id="KW-0694">RNA-binding</keyword>
<keyword id="KW-0699">rRNA-binding</keyword>